<accession>A2BYN4</accession>
<evidence type="ECO:0000250" key="1"/>
<evidence type="ECO:0000255" key="2">
    <source>
        <dbReference type="HAMAP-Rule" id="MF_00118"/>
    </source>
</evidence>
<organism>
    <name type="scientific">Prochlorococcus marinus (strain MIT 9515)</name>
    <dbReference type="NCBI Taxonomy" id="167542"/>
    <lineage>
        <taxon>Bacteria</taxon>
        <taxon>Bacillati</taxon>
        <taxon>Cyanobacteriota</taxon>
        <taxon>Cyanophyceae</taxon>
        <taxon>Synechococcales</taxon>
        <taxon>Prochlorococcaceae</taxon>
        <taxon>Prochlorococcus</taxon>
    </lineage>
</organism>
<sequence length="399" mass="43678">MAREKFERNKPHVNIGTIGHVDHGKTTLTAAITNVLAKKGQAQAQDYGDIDGAPEERERGITINTAHVEYETEGRHYAHVDCPGHADYVKNMITGAAQMDGAILVCAATDGPMAQTKEHILLAKQVGVPALVVALNKCDMVDDEEIIELVEMEIRELLDSYDFPGDDIPIVQVSGLKALEGDSNWESKIEELMKAVDASIPEPEREIDKPFLMAIEDVFSITGRGTVATGRIERGKVKVGEEVEIVGIRDTRLTTVTGVEMFRKLLDEGMAGDNVGLLLRGVQKEDIERGMVLVKKGSITPHTKFEGEVYVLKKEEGGRHTPFFAGYRPQFYIRTTDVTGQITAFTSDDGANVEMVMPGDRIKMTGELICPVAIEQGMRFAIREGGRTIGAGVVSKIIE</sequence>
<feature type="chain" id="PRO_1000015726" description="Elongation factor Tu">
    <location>
        <begin position="1"/>
        <end position="399"/>
    </location>
</feature>
<feature type="domain" description="tr-type G">
    <location>
        <begin position="10"/>
        <end position="204"/>
    </location>
</feature>
<feature type="region of interest" description="G1" evidence="1">
    <location>
        <begin position="19"/>
        <end position="26"/>
    </location>
</feature>
<feature type="region of interest" description="G2" evidence="1">
    <location>
        <begin position="60"/>
        <end position="64"/>
    </location>
</feature>
<feature type="region of interest" description="G3" evidence="1">
    <location>
        <begin position="81"/>
        <end position="84"/>
    </location>
</feature>
<feature type="region of interest" description="G4" evidence="1">
    <location>
        <begin position="136"/>
        <end position="139"/>
    </location>
</feature>
<feature type="region of interest" description="G5" evidence="1">
    <location>
        <begin position="174"/>
        <end position="176"/>
    </location>
</feature>
<feature type="binding site" evidence="2">
    <location>
        <begin position="19"/>
        <end position="26"/>
    </location>
    <ligand>
        <name>GTP</name>
        <dbReference type="ChEBI" id="CHEBI:37565"/>
    </ligand>
</feature>
<feature type="binding site" evidence="2">
    <location>
        <position position="26"/>
    </location>
    <ligand>
        <name>Mg(2+)</name>
        <dbReference type="ChEBI" id="CHEBI:18420"/>
    </ligand>
</feature>
<feature type="binding site" evidence="2">
    <location>
        <begin position="81"/>
        <end position="85"/>
    </location>
    <ligand>
        <name>GTP</name>
        <dbReference type="ChEBI" id="CHEBI:37565"/>
    </ligand>
</feature>
<feature type="binding site" evidence="2">
    <location>
        <begin position="136"/>
        <end position="139"/>
    </location>
    <ligand>
        <name>GTP</name>
        <dbReference type="ChEBI" id="CHEBI:37565"/>
    </ligand>
</feature>
<proteinExistence type="inferred from homology"/>
<keyword id="KW-0963">Cytoplasm</keyword>
<keyword id="KW-0251">Elongation factor</keyword>
<keyword id="KW-0342">GTP-binding</keyword>
<keyword id="KW-0378">Hydrolase</keyword>
<keyword id="KW-0460">Magnesium</keyword>
<keyword id="KW-0479">Metal-binding</keyword>
<keyword id="KW-0547">Nucleotide-binding</keyword>
<keyword id="KW-0648">Protein biosynthesis</keyword>
<gene>
    <name evidence="2" type="primary">tuf</name>
    <name type="ordered locus">P9515_16881</name>
</gene>
<comment type="function">
    <text evidence="2">GTP hydrolase that promotes the GTP-dependent binding of aminoacyl-tRNA to the A-site of ribosomes during protein biosynthesis.</text>
</comment>
<comment type="catalytic activity">
    <reaction evidence="2">
        <text>GTP + H2O = GDP + phosphate + H(+)</text>
        <dbReference type="Rhea" id="RHEA:19669"/>
        <dbReference type="ChEBI" id="CHEBI:15377"/>
        <dbReference type="ChEBI" id="CHEBI:15378"/>
        <dbReference type="ChEBI" id="CHEBI:37565"/>
        <dbReference type="ChEBI" id="CHEBI:43474"/>
        <dbReference type="ChEBI" id="CHEBI:58189"/>
        <dbReference type="EC" id="3.6.5.3"/>
    </reaction>
    <physiologicalReaction direction="left-to-right" evidence="2">
        <dbReference type="Rhea" id="RHEA:19670"/>
    </physiologicalReaction>
</comment>
<comment type="subunit">
    <text evidence="2">Monomer.</text>
</comment>
<comment type="subcellular location">
    <subcellularLocation>
        <location evidence="2">Cytoplasm</location>
    </subcellularLocation>
</comment>
<comment type="similarity">
    <text evidence="2">Belongs to the TRAFAC class translation factor GTPase superfamily. Classic translation factor GTPase family. EF-Tu/EF-1A subfamily.</text>
</comment>
<protein>
    <recommendedName>
        <fullName evidence="2">Elongation factor Tu</fullName>
        <shortName evidence="2">EF-Tu</shortName>
        <ecNumber evidence="2">3.6.5.3</ecNumber>
    </recommendedName>
</protein>
<dbReference type="EC" id="3.6.5.3" evidence="2"/>
<dbReference type="EMBL" id="CP000552">
    <property type="protein sequence ID" value="ABM72895.1"/>
    <property type="molecule type" value="Genomic_DNA"/>
</dbReference>
<dbReference type="RefSeq" id="WP_011820988.1">
    <property type="nucleotide sequence ID" value="NC_008817.1"/>
</dbReference>
<dbReference type="SMR" id="A2BYN4"/>
<dbReference type="STRING" id="167542.P9515_16881"/>
<dbReference type="GeneID" id="60201245"/>
<dbReference type="KEGG" id="pmc:P9515_16881"/>
<dbReference type="eggNOG" id="COG0050">
    <property type="taxonomic scope" value="Bacteria"/>
</dbReference>
<dbReference type="HOGENOM" id="CLU_007265_0_1_3"/>
<dbReference type="OrthoDB" id="9804504at2"/>
<dbReference type="Proteomes" id="UP000001589">
    <property type="component" value="Chromosome"/>
</dbReference>
<dbReference type="GO" id="GO:0005829">
    <property type="term" value="C:cytosol"/>
    <property type="evidence" value="ECO:0007669"/>
    <property type="project" value="TreeGrafter"/>
</dbReference>
<dbReference type="GO" id="GO:0005525">
    <property type="term" value="F:GTP binding"/>
    <property type="evidence" value="ECO:0007669"/>
    <property type="project" value="UniProtKB-UniRule"/>
</dbReference>
<dbReference type="GO" id="GO:0003924">
    <property type="term" value="F:GTPase activity"/>
    <property type="evidence" value="ECO:0007669"/>
    <property type="project" value="InterPro"/>
</dbReference>
<dbReference type="GO" id="GO:0003746">
    <property type="term" value="F:translation elongation factor activity"/>
    <property type="evidence" value="ECO:0007669"/>
    <property type="project" value="UniProtKB-UniRule"/>
</dbReference>
<dbReference type="CDD" id="cd01884">
    <property type="entry name" value="EF_Tu"/>
    <property type="match status" value="1"/>
</dbReference>
<dbReference type="CDD" id="cd03697">
    <property type="entry name" value="EFTU_II"/>
    <property type="match status" value="1"/>
</dbReference>
<dbReference type="CDD" id="cd03707">
    <property type="entry name" value="EFTU_III"/>
    <property type="match status" value="1"/>
</dbReference>
<dbReference type="FunFam" id="2.40.30.10:FF:000001">
    <property type="entry name" value="Elongation factor Tu"/>
    <property type="match status" value="1"/>
</dbReference>
<dbReference type="FunFam" id="2.40.30.10:FF:000046">
    <property type="entry name" value="Elongation factor Tu"/>
    <property type="match status" value="1"/>
</dbReference>
<dbReference type="FunFam" id="3.40.50.300:FF:000003">
    <property type="entry name" value="Elongation factor Tu"/>
    <property type="match status" value="1"/>
</dbReference>
<dbReference type="Gene3D" id="3.40.50.300">
    <property type="entry name" value="P-loop containing nucleotide triphosphate hydrolases"/>
    <property type="match status" value="1"/>
</dbReference>
<dbReference type="Gene3D" id="2.40.30.10">
    <property type="entry name" value="Translation factors"/>
    <property type="match status" value="2"/>
</dbReference>
<dbReference type="HAMAP" id="MF_00118_B">
    <property type="entry name" value="EF_Tu_B"/>
    <property type="match status" value="1"/>
</dbReference>
<dbReference type="InterPro" id="IPR041709">
    <property type="entry name" value="EF-Tu_GTP-bd"/>
</dbReference>
<dbReference type="InterPro" id="IPR050055">
    <property type="entry name" value="EF-Tu_GTPase"/>
</dbReference>
<dbReference type="InterPro" id="IPR004161">
    <property type="entry name" value="EFTu-like_2"/>
</dbReference>
<dbReference type="InterPro" id="IPR033720">
    <property type="entry name" value="EFTU_2"/>
</dbReference>
<dbReference type="InterPro" id="IPR031157">
    <property type="entry name" value="G_TR_CS"/>
</dbReference>
<dbReference type="InterPro" id="IPR027417">
    <property type="entry name" value="P-loop_NTPase"/>
</dbReference>
<dbReference type="InterPro" id="IPR005225">
    <property type="entry name" value="Small_GTP-bd"/>
</dbReference>
<dbReference type="InterPro" id="IPR000795">
    <property type="entry name" value="T_Tr_GTP-bd_dom"/>
</dbReference>
<dbReference type="InterPro" id="IPR009000">
    <property type="entry name" value="Transl_B-barrel_sf"/>
</dbReference>
<dbReference type="InterPro" id="IPR009001">
    <property type="entry name" value="Transl_elong_EF1A/Init_IF2_C"/>
</dbReference>
<dbReference type="InterPro" id="IPR004541">
    <property type="entry name" value="Transl_elong_EFTu/EF1A_bac/org"/>
</dbReference>
<dbReference type="InterPro" id="IPR004160">
    <property type="entry name" value="Transl_elong_EFTu/EF1A_C"/>
</dbReference>
<dbReference type="NCBIfam" id="TIGR00485">
    <property type="entry name" value="EF-Tu"/>
    <property type="match status" value="1"/>
</dbReference>
<dbReference type="NCBIfam" id="NF000766">
    <property type="entry name" value="PRK00049.1"/>
    <property type="match status" value="1"/>
</dbReference>
<dbReference type="NCBIfam" id="NF009372">
    <property type="entry name" value="PRK12735.1"/>
    <property type="match status" value="1"/>
</dbReference>
<dbReference type="NCBIfam" id="NF009373">
    <property type="entry name" value="PRK12736.1"/>
    <property type="match status" value="1"/>
</dbReference>
<dbReference type="NCBIfam" id="TIGR00231">
    <property type="entry name" value="small_GTP"/>
    <property type="match status" value="1"/>
</dbReference>
<dbReference type="PANTHER" id="PTHR43721:SF22">
    <property type="entry name" value="ELONGATION FACTOR TU, MITOCHONDRIAL"/>
    <property type="match status" value="1"/>
</dbReference>
<dbReference type="PANTHER" id="PTHR43721">
    <property type="entry name" value="ELONGATION FACTOR TU-RELATED"/>
    <property type="match status" value="1"/>
</dbReference>
<dbReference type="Pfam" id="PF00009">
    <property type="entry name" value="GTP_EFTU"/>
    <property type="match status" value="1"/>
</dbReference>
<dbReference type="Pfam" id="PF03144">
    <property type="entry name" value="GTP_EFTU_D2"/>
    <property type="match status" value="1"/>
</dbReference>
<dbReference type="Pfam" id="PF03143">
    <property type="entry name" value="GTP_EFTU_D3"/>
    <property type="match status" value="1"/>
</dbReference>
<dbReference type="PRINTS" id="PR00315">
    <property type="entry name" value="ELONGATNFCT"/>
</dbReference>
<dbReference type="SUPFAM" id="SSF50465">
    <property type="entry name" value="EF-Tu/eEF-1alpha/eIF2-gamma C-terminal domain"/>
    <property type="match status" value="1"/>
</dbReference>
<dbReference type="SUPFAM" id="SSF52540">
    <property type="entry name" value="P-loop containing nucleoside triphosphate hydrolases"/>
    <property type="match status" value="1"/>
</dbReference>
<dbReference type="SUPFAM" id="SSF50447">
    <property type="entry name" value="Translation proteins"/>
    <property type="match status" value="1"/>
</dbReference>
<dbReference type="PROSITE" id="PS00301">
    <property type="entry name" value="G_TR_1"/>
    <property type="match status" value="1"/>
</dbReference>
<dbReference type="PROSITE" id="PS51722">
    <property type="entry name" value="G_TR_2"/>
    <property type="match status" value="1"/>
</dbReference>
<reference key="1">
    <citation type="journal article" date="2007" name="PLoS Genet.">
        <title>Patterns and implications of gene gain and loss in the evolution of Prochlorococcus.</title>
        <authorList>
            <person name="Kettler G.C."/>
            <person name="Martiny A.C."/>
            <person name="Huang K."/>
            <person name="Zucker J."/>
            <person name="Coleman M.L."/>
            <person name="Rodrigue S."/>
            <person name="Chen F."/>
            <person name="Lapidus A."/>
            <person name="Ferriera S."/>
            <person name="Johnson J."/>
            <person name="Steglich C."/>
            <person name="Church G.M."/>
            <person name="Richardson P."/>
            <person name="Chisholm S.W."/>
        </authorList>
    </citation>
    <scope>NUCLEOTIDE SEQUENCE [LARGE SCALE GENOMIC DNA]</scope>
    <source>
        <strain>MIT 9515</strain>
    </source>
</reference>
<name>EFTU_PROM5</name>